<comment type="function">
    <text evidence="1">Probably catalyzes the hydrolysis of L-ascorbate-6-P into 3-keto-L-gulonate-6-P. Is essential for L-ascorbate utilization under anaerobic conditions.</text>
</comment>
<comment type="catalytic activity">
    <reaction evidence="1">
        <text>L-ascorbate 6-phosphate + H2O = 3-dehydro-L-gulonate 6-phosphate</text>
        <dbReference type="Rhea" id="RHEA:28803"/>
        <dbReference type="ChEBI" id="CHEBI:15377"/>
        <dbReference type="ChEBI" id="CHEBI:58774"/>
        <dbReference type="ChEBI" id="CHEBI:61698"/>
    </reaction>
</comment>
<comment type="cofactor">
    <cofactor evidence="1">
        <name>a divalent metal cation</name>
        <dbReference type="ChEBI" id="CHEBI:60240"/>
    </cofactor>
</comment>
<comment type="pathway">
    <text evidence="1">Cofactor degradation; L-ascorbate degradation; D-xylulose 5-phosphate from L-ascorbate: step 1/4.</text>
</comment>
<comment type="subcellular location">
    <subcellularLocation>
        <location evidence="1">Cytoplasm</location>
    </subcellularLocation>
</comment>
<comment type="induction">
    <text evidence="1">Induced by L-ascorbate. Repressed by UlaR.</text>
</comment>
<comment type="similarity">
    <text evidence="1">Belongs to the UlaG family.</text>
</comment>
<comment type="sequence caution" evidence="2">
    <conflict type="erroneous initiation">
        <sequence resource="EMBL-CDS" id="AAN83701"/>
    </conflict>
</comment>
<evidence type="ECO:0000255" key="1">
    <source>
        <dbReference type="HAMAP-Rule" id="MF_01266"/>
    </source>
</evidence>
<evidence type="ECO:0000305" key="2"/>
<organism>
    <name type="scientific">Escherichia coli O6:H1 (strain CFT073 / ATCC 700928 / UPEC)</name>
    <dbReference type="NCBI Taxonomy" id="199310"/>
    <lineage>
        <taxon>Bacteria</taxon>
        <taxon>Pseudomonadati</taxon>
        <taxon>Pseudomonadota</taxon>
        <taxon>Gammaproteobacteria</taxon>
        <taxon>Enterobacterales</taxon>
        <taxon>Enterobacteriaceae</taxon>
        <taxon>Escherichia</taxon>
    </lineage>
</organism>
<dbReference type="EC" id="3.1.1.-" evidence="1"/>
<dbReference type="EMBL" id="AE014075">
    <property type="protein sequence ID" value="AAN83701.1"/>
    <property type="status" value="ALT_INIT"/>
    <property type="molecule type" value="Genomic_DNA"/>
</dbReference>
<dbReference type="RefSeq" id="WP_001350385.1">
    <property type="nucleotide sequence ID" value="NZ_CP051263.1"/>
</dbReference>
<dbReference type="SMR" id="Q8FAJ4"/>
<dbReference type="STRING" id="199310.c5280"/>
<dbReference type="KEGG" id="ecc:c5280"/>
<dbReference type="eggNOG" id="COG2220">
    <property type="taxonomic scope" value="Bacteria"/>
</dbReference>
<dbReference type="HOGENOM" id="CLU_074775_0_0_6"/>
<dbReference type="UniPathway" id="UPA00263">
    <property type="reaction ID" value="UER00377"/>
</dbReference>
<dbReference type="Proteomes" id="UP000001410">
    <property type="component" value="Chromosome"/>
</dbReference>
<dbReference type="GO" id="GO:0005737">
    <property type="term" value="C:cytoplasm"/>
    <property type="evidence" value="ECO:0007669"/>
    <property type="project" value="UniProtKB-SubCell"/>
</dbReference>
<dbReference type="GO" id="GO:0035460">
    <property type="term" value="F:L-ascorbate 6-phosphate lactonase activity"/>
    <property type="evidence" value="ECO:0007669"/>
    <property type="project" value="InterPro"/>
</dbReference>
<dbReference type="GO" id="GO:0030145">
    <property type="term" value="F:manganese ion binding"/>
    <property type="evidence" value="ECO:0007669"/>
    <property type="project" value="InterPro"/>
</dbReference>
<dbReference type="GO" id="GO:0019854">
    <property type="term" value="P:L-ascorbic acid catabolic process"/>
    <property type="evidence" value="ECO:0007669"/>
    <property type="project" value="UniProtKB-UniRule"/>
</dbReference>
<dbReference type="CDD" id="cd16284">
    <property type="entry name" value="UlaG-like_MBL-fold"/>
    <property type="match status" value="1"/>
</dbReference>
<dbReference type="FunFam" id="3.60.15.10:FF:000004">
    <property type="entry name" value="Probable L-ascorbate-6-phosphate lactonase UlaG"/>
    <property type="match status" value="1"/>
</dbReference>
<dbReference type="Gene3D" id="3.60.15.10">
    <property type="entry name" value="Ribonuclease Z/Hydroxyacylglutathione hydrolase-like"/>
    <property type="match status" value="1"/>
</dbReference>
<dbReference type="HAMAP" id="MF_01266">
    <property type="entry name" value="UlaG"/>
    <property type="match status" value="1"/>
</dbReference>
<dbReference type="InterPro" id="IPR023951">
    <property type="entry name" value="L-ascorbate_6P_UlaG"/>
</dbReference>
<dbReference type="InterPro" id="IPR001279">
    <property type="entry name" value="Metallo-B-lactamas"/>
</dbReference>
<dbReference type="InterPro" id="IPR036866">
    <property type="entry name" value="RibonucZ/Hydroxyglut_hydro"/>
</dbReference>
<dbReference type="InterPro" id="IPR048021">
    <property type="entry name" value="UlaG-like_MBL-fold"/>
</dbReference>
<dbReference type="InterPro" id="IPR050114">
    <property type="entry name" value="UPF0173_UPF0282_UlaG_hydrolase"/>
</dbReference>
<dbReference type="NCBIfam" id="NF008688">
    <property type="entry name" value="PRK11709.1"/>
    <property type="match status" value="1"/>
</dbReference>
<dbReference type="PANTHER" id="PTHR43546:SF9">
    <property type="entry name" value="L-ASCORBATE-6-PHOSPHATE LACTONASE ULAG-RELATED"/>
    <property type="match status" value="1"/>
</dbReference>
<dbReference type="PANTHER" id="PTHR43546">
    <property type="entry name" value="UPF0173 METAL-DEPENDENT HYDROLASE MJ1163-RELATED"/>
    <property type="match status" value="1"/>
</dbReference>
<dbReference type="Pfam" id="PF12706">
    <property type="entry name" value="Lactamase_B_2"/>
    <property type="match status" value="1"/>
</dbReference>
<dbReference type="SUPFAM" id="SSF56281">
    <property type="entry name" value="Metallo-hydrolase/oxidoreductase"/>
    <property type="match status" value="1"/>
</dbReference>
<accession>Q8FAJ4</accession>
<proteinExistence type="inferred from homology"/>
<sequence length="354" mass="40027">MSKVKSITRESWILSTFPEWGSWLNEEIEQEQVAPGTFAMWWLGCTGIWLKSEGGANVCVDFWCGTGKQSHGNPLMKQGHQMQRMAGVKKLQPNLRTTPFVLDPFAIRQIDAVLATHDHNDHIDVNVAAAVMQNCADDVPFIGPKTCVDLWIGWGVPKERCIVVKPGDVVKVKDIEIHALDAFDRTALITLPADQKAAGVLPDGMDDRAVNYLFKTPGGTLYHSGDSHYSNYYAKHGNEHQIDVALGSYGENPRGITDKMTSADILRMGEALNAKVVIPFHHDIWSNFQADPQEIRVLWEMKKDRLKYGFKPFIWQVGGKFTWPLDKDNFEYHYPRGFDDCFTIEPDLPFKSFL</sequence>
<keyword id="KW-0963">Cytoplasm</keyword>
<keyword id="KW-0378">Hydrolase</keyword>
<keyword id="KW-1185">Reference proteome</keyword>
<feature type="chain" id="PRO_0000231484" description="Probable L-ascorbate-6-phosphate lactonase UlaG">
    <location>
        <begin position="1"/>
        <end position="354"/>
    </location>
</feature>
<reference key="1">
    <citation type="journal article" date="2002" name="Proc. Natl. Acad. Sci. U.S.A.">
        <title>Extensive mosaic structure revealed by the complete genome sequence of uropathogenic Escherichia coli.</title>
        <authorList>
            <person name="Welch R.A."/>
            <person name="Burland V."/>
            <person name="Plunkett G. III"/>
            <person name="Redford P."/>
            <person name="Roesch P."/>
            <person name="Rasko D."/>
            <person name="Buckles E.L."/>
            <person name="Liou S.-R."/>
            <person name="Boutin A."/>
            <person name="Hackett J."/>
            <person name="Stroud D."/>
            <person name="Mayhew G.F."/>
            <person name="Rose D.J."/>
            <person name="Zhou S."/>
            <person name="Schwartz D.C."/>
            <person name="Perna N.T."/>
            <person name="Mobley H.L.T."/>
            <person name="Donnenberg M.S."/>
            <person name="Blattner F.R."/>
        </authorList>
    </citation>
    <scope>NUCLEOTIDE SEQUENCE [LARGE SCALE GENOMIC DNA]</scope>
    <source>
        <strain>CFT073 / ATCC 700928 / UPEC</strain>
    </source>
</reference>
<gene>
    <name evidence="1" type="primary">ulaG</name>
    <name type="ordered locus">c5280</name>
</gene>
<protein>
    <recommendedName>
        <fullName evidence="1">Probable L-ascorbate-6-phosphate lactonase UlaG</fullName>
        <ecNumber evidence="1">3.1.1.-</ecNumber>
    </recommendedName>
    <alternativeName>
        <fullName evidence="1">L-ascorbate utilization protein G</fullName>
    </alternativeName>
</protein>
<name>ULAG_ECOL6</name>